<dbReference type="EC" id="3.4.21.89"/>
<dbReference type="EMBL" id="U45883">
    <property type="protein sequence ID" value="AAB07348.1"/>
    <property type="molecule type" value="Genomic_DNA"/>
</dbReference>
<dbReference type="EMBL" id="AF012285">
    <property type="protein sequence ID" value="AAC24916.1"/>
    <property type="molecule type" value="Genomic_DNA"/>
</dbReference>
<dbReference type="EMBL" id="AL009126">
    <property type="protein sequence ID" value="CAB13314.1"/>
    <property type="molecule type" value="Genomic_DNA"/>
</dbReference>
<dbReference type="PIR" id="G69707">
    <property type="entry name" value="G69707"/>
</dbReference>
<dbReference type="RefSeq" id="NP_389324.1">
    <property type="nucleotide sequence ID" value="NC_000964.3"/>
</dbReference>
<dbReference type="RefSeq" id="WP_003232348.1">
    <property type="nucleotide sequence ID" value="NZ_OZ025638.1"/>
</dbReference>
<dbReference type="SMR" id="P71013"/>
<dbReference type="FunCoup" id="P71013">
    <property type="interactions" value="515"/>
</dbReference>
<dbReference type="STRING" id="224308.BSU14410"/>
<dbReference type="MEROPS" id="S26.004"/>
<dbReference type="PaxDb" id="224308-BSU14410"/>
<dbReference type="EnsemblBacteria" id="CAB13314">
    <property type="protein sequence ID" value="CAB13314"/>
    <property type="gene ID" value="BSU_14410"/>
</dbReference>
<dbReference type="GeneID" id="938763"/>
<dbReference type="KEGG" id="bsu:BSU14410"/>
<dbReference type="PATRIC" id="fig|224308.179.peg.1571"/>
<dbReference type="eggNOG" id="COG0681">
    <property type="taxonomic scope" value="Bacteria"/>
</dbReference>
<dbReference type="InParanoid" id="P71013"/>
<dbReference type="OrthoDB" id="9802919at2"/>
<dbReference type="PhylomeDB" id="P71013"/>
<dbReference type="BioCyc" id="BSUB:BSU14410-MONOMER"/>
<dbReference type="Proteomes" id="UP000001570">
    <property type="component" value="Chromosome"/>
</dbReference>
<dbReference type="GO" id="GO:0005886">
    <property type="term" value="C:plasma membrane"/>
    <property type="evidence" value="ECO:0007669"/>
    <property type="project" value="UniProtKB-SubCell"/>
</dbReference>
<dbReference type="GO" id="GO:0004252">
    <property type="term" value="F:serine-type endopeptidase activity"/>
    <property type="evidence" value="ECO:0000318"/>
    <property type="project" value="GO_Central"/>
</dbReference>
<dbReference type="GO" id="GO:0006465">
    <property type="term" value="P:signal peptide processing"/>
    <property type="evidence" value="ECO:0000318"/>
    <property type="project" value="GO_Central"/>
</dbReference>
<dbReference type="CDD" id="cd06530">
    <property type="entry name" value="S26_SPase_I"/>
    <property type="match status" value="1"/>
</dbReference>
<dbReference type="FunFam" id="2.10.109.10:FF:000008">
    <property type="entry name" value="Signal peptidase I"/>
    <property type="match status" value="1"/>
</dbReference>
<dbReference type="Gene3D" id="2.10.109.10">
    <property type="entry name" value="Umud Fragment, subunit A"/>
    <property type="match status" value="1"/>
</dbReference>
<dbReference type="InterPro" id="IPR036286">
    <property type="entry name" value="LexA/Signal_pep-like_sf"/>
</dbReference>
<dbReference type="InterPro" id="IPR000223">
    <property type="entry name" value="Pept_S26A_signal_pept_1"/>
</dbReference>
<dbReference type="InterPro" id="IPR019758">
    <property type="entry name" value="Pept_S26A_signal_pept_1_CS"/>
</dbReference>
<dbReference type="InterPro" id="IPR019757">
    <property type="entry name" value="Pept_S26A_signal_pept_1_Lys-AS"/>
</dbReference>
<dbReference type="InterPro" id="IPR019756">
    <property type="entry name" value="Pept_S26A_signal_pept_1_Ser-AS"/>
</dbReference>
<dbReference type="InterPro" id="IPR019533">
    <property type="entry name" value="Peptidase_S26"/>
</dbReference>
<dbReference type="NCBIfam" id="TIGR02227">
    <property type="entry name" value="sigpep_I_bact"/>
    <property type="match status" value="1"/>
</dbReference>
<dbReference type="PANTHER" id="PTHR43390:SF1">
    <property type="entry name" value="CHLOROPLAST PROCESSING PEPTIDASE"/>
    <property type="match status" value="1"/>
</dbReference>
<dbReference type="PANTHER" id="PTHR43390">
    <property type="entry name" value="SIGNAL PEPTIDASE I"/>
    <property type="match status" value="1"/>
</dbReference>
<dbReference type="Pfam" id="PF10502">
    <property type="entry name" value="Peptidase_S26"/>
    <property type="match status" value="1"/>
</dbReference>
<dbReference type="PRINTS" id="PR00727">
    <property type="entry name" value="LEADERPTASE"/>
</dbReference>
<dbReference type="SUPFAM" id="SSF51306">
    <property type="entry name" value="LexA/Signal peptidase"/>
    <property type="match status" value="1"/>
</dbReference>
<dbReference type="PROSITE" id="PS00501">
    <property type="entry name" value="SPASE_I_1"/>
    <property type="match status" value="1"/>
</dbReference>
<dbReference type="PROSITE" id="PS00760">
    <property type="entry name" value="SPASE_I_2"/>
    <property type="match status" value="1"/>
</dbReference>
<dbReference type="PROSITE" id="PS00761">
    <property type="entry name" value="SPASE_I_3"/>
    <property type="match status" value="1"/>
</dbReference>
<keyword id="KW-1003">Cell membrane</keyword>
<keyword id="KW-0378">Hydrolase</keyword>
<keyword id="KW-0472">Membrane</keyword>
<keyword id="KW-0645">Protease</keyword>
<keyword id="KW-1185">Reference proteome</keyword>
<keyword id="KW-0812">Transmembrane</keyword>
<keyword id="KW-1133">Transmembrane helix</keyword>
<accession>P71013</accession>
<name>LEPT_BACSU</name>
<gene>
    <name type="primary">sipT</name>
    <name type="ordered locus">BSU14410</name>
</gene>
<evidence type="ECO:0000250" key="1"/>
<evidence type="ECO:0000255" key="2"/>
<evidence type="ECO:0000305" key="3"/>
<protein>
    <recommendedName>
        <fullName>Signal peptidase I T</fullName>
        <shortName>SPase I</shortName>
        <ecNumber>3.4.21.89</ecNumber>
    </recommendedName>
    <alternativeName>
        <fullName>Leader peptidase I</fullName>
    </alternativeName>
</protein>
<sequence>MTEEKNTNTEKTAKKKTNTYLEWGKAIVIAVLLALLIRHFLFEPYLVEGSSMYPTLHDGERLFVNKTVNYIGELKRGDIVIINGETSKIHYVKRLIGKPGETVQMKDDTLYINGKKVAEPYLSKNKKEAEKLGVSLTGDFGPVKVPKGKYFVMGDNRLNSMDSRNGLGLIAEDRIVGTSKFVFFPFNEMRQTK</sequence>
<organism>
    <name type="scientific">Bacillus subtilis (strain 168)</name>
    <dbReference type="NCBI Taxonomy" id="224308"/>
    <lineage>
        <taxon>Bacteria</taxon>
        <taxon>Bacillati</taxon>
        <taxon>Bacillota</taxon>
        <taxon>Bacilli</taxon>
        <taxon>Bacillales</taxon>
        <taxon>Bacillaceae</taxon>
        <taxon>Bacillus</taxon>
    </lineage>
</organism>
<comment type="catalytic activity">
    <reaction>
        <text>Cleavage of hydrophobic, N-terminal signal or leader sequences from secreted and periplasmic proteins.</text>
        <dbReference type="EC" id="3.4.21.89"/>
    </reaction>
</comment>
<comment type="subcellular location">
    <subcellularLocation>
        <location evidence="3">Cell membrane</location>
        <topology evidence="3">Single-pass type II membrane protein</topology>
    </subcellularLocation>
</comment>
<comment type="induction">
    <text>Expressed at the postexponential growth phase; regulated by the DegS-DegU system.</text>
</comment>
<comment type="miscellaneous">
    <text>B.subtilis contains five chromosomal type I signal peptidases: SipS, SipT, SipU, SipV and SipW. They have different, but overlapping, substrate specificities and have different transcription patterns.</text>
</comment>
<comment type="similarity">
    <text evidence="3">Belongs to the peptidase S26 family.</text>
</comment>
<proteinExistence type="evidence at protein level"/>
<feature type="chain" id="PRO_0000109500" description="Signal peptidase I T">
    <location>
        <begin position="1"/>
        <end position="193"/>
    </location>
</feature>
<feature type="topological domain" description="Cytoplasmic" evidence="2">
    <location>
        <begin position="1"/>
        <end position="25"/>
    </location>
</feature>
<feature type="transmembrane region" description="Helical" evidence="2">
    <location>
        <begin position="26"/>
        <end position="42"/>
    </location>
</feature>
<feature type="topological domain" description="Extracellular" evidence="2">
    <location>
        <begin position="43"/>
        <end position="193"/>
    </location>
</feature>
<feature type="active site" evidence="1">
    <location>
        <position position="51"/>
    </location>
</feature>
<feature type="active site" evidence="1">
    <location>
        <position position="93"/>
    </location>
</feature>
<reference key="1">
    <citation type="submission" date="1996-01" db="EMBL/GenBank/DDBJ databases">
        <authorList>
            <person name="Tjalsma H."/>
            <person name="Bolhuis A."/>
            <person name="Bron S."/>
            <person name="Venema G."/>
            <person name="van Dijl J.M."/>
        </authorList>
    </citation>
    <scope>NUCLEOTIDE SEQUENCE [GENOMIC DNA]</scope>
    <source>
        <strain>168</strain>
    </source>
</reference>
<reference key="2">
    <citation type="journal article" date="1996" name="Microbiology">
        <title>The ampS-nprE (124 degrees-127 degrees) region of the Bacillus subtilis 168 chromosome: sequencing of a 27 kb segment and identification of several genes in the area.</title>
        <authorList>
            <person name="Winters P."/>
            <person name="Caldwell R.M."/>
            <person name="Enfield L."/>
            <person name="Ferrari E."/>
        </authorList>
    </citation>
    <scope>NUCLEOTIDE SEQUENCE [GENOMIC DNA]</scope>
    <source>
        <strain>168</strain>
    </source>
</reference>
<reference key="3">
    <citation type="journal article" date="1997" name="Nature">
        <title>The complete genome sequence of the Gram-positive bacterium Bacillus subtilis.</title>
        <authorList>
            <person name="Kunst F."/>
            <person name="Ogasawara N."/>
            <person name="Moszer I."/>
            <person name="Albertini A.M."/>
            <person name="Alloni G."/>
            <person name="Azevedo V."/>
            <person name="Bertero M.G."/>
            <person name="Bessieres P."/>
            <person name="Bolotin A."/>
            <person name="Borchert S."/>
            <person name="Borriss R."/>
            <person name="Boursier L."/>
            <person name="Brans A."/>
            <person name="Braun M."/>
            <person name="Brignell S.C."/>
            <person name="Bron S."/>
            <person name="Brouillet S."/>
            <person name="Bruschi C.V."/>
            <person name="Caldwell B."/>
            <person name="Capuano V."/>
            <person name="Carter N.M."/>
            <person name="Choi S.-K."/>
            <person name="Codani J.-J."/>
            <person name="Connerton I.F."/>
            <person name="Cummings N.J."/>
            <person name="Daniel R.A."/>
            <person name="Denizot F."/>
            <person name="Devine K.M."/>
            <person name="Duesterhoeft A."/>
            <person name="Ehrlich S.D."/>
            <person name="Emmerson P.T."/>
            <person name="Entian K.-D."/>
            <person name="Errington J."/>
            <person name="Fabret C."/>
            <person name="Ferrari E."/>
            <person name="Foulger D."/>
            <person name="Fritz C."/>
            <person name="Fujita M."/>
            <person name="Fujita Y."/>
            <person name="Fuma S."/>
            <person name="Galizzi A."/>
            <person name="Galleron N."/>
            <person name="Ghim S.-Y."/>
            <person name="Glaser P."/>
            <person name="Goffeau A."/>
            <person name="Golightly E.J."/>
            <person name="Grandi G."/>
            <person name="Guiseppi G."/>
            <person name="Guy B.J."/>
            <person name="Haga K."/>
            <person name="Haiech J."/>
            <person name="Harwood C.R."/>
            <person name="Henaut A."/>
            <person name="Hilbert H."/>
            <person name="Holsappel S."/>
            <person name="Hosono S."/>
            <person name="Hullo M.-F."/>
            <person name="Itaya M."/>
            <person name="Jones L.-M."/>
            <person name="Joris B."/>
            <person name="Karamata D."/>
            <person name="Kasahara Y."/>
            <person name="Klaerr-Blanchard M."/>
            <person name="Klein C."/>
            <person name="Kobayashi Y."/>
            <person name="Koetter P."/>
            <person name="Koningstein G."/>
            <person name="Krogh S."/>
            <person name="Kumano M."/>
            <person name="Kurita K."/>
            <person name="Lapidus A."/>
            <person name="Lardinois S."/>
            <person name="Lauber J."/>
            <person name="Lazarevic V."/>
            <person name="Lee S.-M."/>
            <person name="Levine A."/>
            <person name="Liu H."/>
            <person name="Masuda S."/>
            <person name="Mauel C."/>
            <person name="Medigue C."/>
            <person name="Medina N."/>
            <person name="Mellado R.P."/>
            <person name="Mizuno M."/>
            <person name="Moestl D."/>
            <person name="Nakai S."/>
            <person name="Noback M."/>
            <person name="Noone D."/>
            <person name="O'Reilly M."/>
            <person name="Ogawa K."/>
            <person name="Ogiwara A."/>
            <person name="Oudega B."/>
            <person name="Park S.-H."/>
            <person name="Parro V."/>
            <person name="Pohl T.M."/>
            <person name="Portetelle D."/>
            <person name="Porwollik S."/>
            <person name="Prescott A.M."/>
            <person name="Presecan E."/>
            <person name="Pujic P."/>
            <person name="Purnelle B."/>
            <person name="Rapoport G."/>
            <person name="Rey M."/>
            <person name="Reynolds S."/>
            <person name="Rieger M."/>
            <person name="Rivolta C."/>
            <person name="Rocha E."/>
            <person name="Roche B."/>
            <person name="Rose M."/>
            <person name="Sadaie Y."/>
            <person name="Sato T."/>
            <person name="Scanlan E."/>
            <person name="Schleich S."/>
            <person name="Schroeter R."/>
            <person name="Scoffone F."/>
            <person name="Sekiguchi J."/>
            <person name="Sekowska A."/>
            <person name="Seror S.J."/>
            <person name="Serror P."/>
            <person name="Shin B.-S."/>
            <person name="Soldo B."/>
            <person name="Sorokin A."/>
            <person name="Tacconi E."/>
            <person name="Takagi T."/>
            <person name="Takahashi H."/>
            <person name="Takemaru K."/>
            <person name="Takeuchi M."/>
            <person name="Tamakoshi A."/>
            <person name="Tanaka T."/>
            <person name="Terpstra P."/>
            <person name="Tognoni A."/>
            <person name="Tosato V."/>
            <person name="Uchiyama S."/>
            <person name="Vandenbol M."/>
            <person name="Vannier F."/>
            <person name="Vassarotti A."/>
            <person name="Viari A."/>
            <person name="Wambutt R."/>
            <person name="Wedler E."/>
            <person name="Wedler H."/>
            <person name="Weitzenegger T."/>
            <person name="Winters P."/>
            <person name="Wipat A."/>
            <person name="Yamamoto H."/>
            <person name="Yamane K."/>
            <person name="Yasumoto K."/>
            <person name="Yata K."/>
            <person name="Yoshida K."/>
            <person name="Yoshikawa H.-F."/>
            <person name="Zumstein E."/>
            <person name="Yoshikawa H."/>
            <person name="Danchin A."/>
        </authorList>
    </citation>
    <scope>NUCLEOTIDE SEQUENCE [LARGE SCALE GENOMIC DNA]</scope>
    <source>
        <strain>168</strain>
    </source>
</reference>
<reference key="4">
    <citation type="journal article" date="1998" name="Genes Dev.">
        <title>Functional analysis of the secretory precursor processing machinery of Bacillus subtilis: identification of a eubacterial homolog of archaeal and eukaryotic signal peptidases.</title>
        <authorList>
            <person name="Tjalsma H."/>
            <person name="Bolhuis A."/>
            <person name="van Roosmalen M.L."/>
            <person name="Wiegert T."/>
            <person name="Schumann W."/>
            <person name="Broekhuizen C.P."/>
            <person name="Quax W.J."/>
            <person name="Venema G."/>
            <person name="Bron S."/>
            <person name="van Dijl J.M."/>
        </authorList>
    </citation>
    <scope>CHARACTERIZATION</scope>
</reference>
<reference key="5">
    <citation type="journal article" date="1998" name="J. Biotechnol.">
        <title>Protein secretion and possible roles for multiple signal peptidases for precursor processing in bacilli.</title>
        <authorList>
            <person name="Bron S."/>
            <person name="Bolhuis A."/>
            <person name="Tjalsma H."/>
            <person name="Holsappel S."/>
            <person name="Venema G."/>
            <person name="van Dijl J.M."/>
        </authorList>
    </citation>
    <scope>REVIEW</scope>
</reference>